<gene>
    <name type="primary">rseA</name>
    <name type="synonym">mclA</name>
    <name type="ordered locus">HI_0629</name>
</gene>
<protein>
    <recommendedName>
        <fullName>Anti-sigma-E factor RseA</fullName>
    </recommendedName>
    <alternativeName>
        <fullName>Regulator of SigE</fullName>
    </alternativeName>
    <alternativeName>
        <fullName>Sigma-E anti-sigma factor RseA</fullName>
    </alternativeName>
    <alternativeName>
        <fullName>Sigma-E factor negative regulatory protein</fullName>
    </alternativeName>
</protein>
<name>RSEA_HAEIN</name>
<accession>P44791</accession>
<dbReference type="EMBL" id="L42023">
    <property type="protein sequence ID" value="AAC22289.1"/>
    <property type="molecule type" value="Genomic_DNA"/>
</dbReference>
<dbReference type="PIR" id="G64082">
    <property type="entry name" value="G64082"/>
</dbReference>
<dbReference type="RefSeq" id="NP_438789.1">
    <property type="nucleotide sequence ID" value="NC_000907.1"/>
</dbReference>
<dbReference type="SMR" id="P44791"/>
<dbReference type="STRING" id="71421.HI_0629"/>
<dbReference type="EnsemblBacteria" id="AAC22289">
    <property type="protein sequence ID" value="AAC22289"/>
    <property type="gene ID" value="HI_0629"/>
</dbReference>
<dbReference type="KEGG" id="hin:HI_0629"/>
<dbReference type="PATRIC" id="fig|71421.8.peg.655"/>
<dbReference type="eggNOG" id="COG3073">
    <property type="taxonomic scope" value="Bacteria"/>
</dbReference>
<dbReference type="HOGENOM" id="CLU_108851_0_0_6"/>
<dbReference type="OrthoDB" id="6194196at2"/>
<dbReference type="PhylomeDB" id="P44791"/>
<dbReference type="BioCyc" id="HINF71421:G1GJ1-656-MONOMER"/>
<dbReference type="Proteomes" id="UP000000579">
    <property type="component" value="Chromosome"/>
</dbReference>
<dbReference type="GO" id="GO:0005886">
    <property type="term" value="C:plasma membrane"/>
    <property type="evidence" value="ECO:0007669"/>
    <property type="project" value="UniProtKB-SubCell"/>
</dbReference>
<dbReference type="GO" id="GO:0016989">
    <property type="term" value="F:sigma factor antagonist activity"/>
    <property type="evidence" value="ECO:0000318"/>
    <property type="project" value="GO_Central"/>
</dbReference>
<dbReference type="CDD" id="cd16328">
    <property type="entry name" value="RseA_N"/>
    <property type="match status" value="1"/>
</dbReference>
<dbReference type="FunFam" id="1.20.5.3960:FF:000001">
    <property type="entry name" value="Anti-sigma-E factor RseA"/>
    <property type="match status" value="1"/>
</dbReference>
<dbReference type="Gene3D" id="1.20.5.3960">
    <property type="match status" value="1"/>
</dbReference>
<dbReference type="Gene3D" id="1.10.10.880">
    <property type="entry name" value="Anti sigma-E protein RseA, N-terminal domain"/>
    <property type="match status" value="1"/>
</dbReference>
<dbReference type="InterPro" id="IPR052383">
    <property type="entry name" value="Anti-sigma-E_RseA-like"/>
</dbReference>
<dbReference type="InterPro" id="IPR005573">
    <property type="entry name" value="Anti-sigma_E_RseA_C"/>
</dbReference>
<dbReference type="InterPro" id="IPR005572">
    <property type="entry name" value="Anti-sigma_E_RseA_N"/>
</dbReference>
<dbReference type="InterPro" id="IPR036147">
    <property type="entry name" value="Anti-sigma_E_RseA_N_sf"/>
</dbReference>
<dbReference type="InterPro" id="IPR026279">
    <property type="entry name" value="RseA"/>
</dbReference>
<dbReference type="PANTHER" id="PTHR38104">
    <property type="match status" value="1"/>
</dbReference>
<dbReference type="PANTHER" id="PTHR38104:SF1">
    <property type="entry name" value="ANTI-SIGMA-E FACTOR RSEA"/>
    <property type="match status" value="1"/>
</dbReference>
<dbReference type="Pfam" id="PF03873">
    <property type="entry name" value="RseA_C"/>
    <property type="match status" value="1"/>
</dbReference>
<dbReference type="Pfam" id="PF03872">
    <property type="entry name" value="RseA_N"/>
    <property type="match status" value="1"/>
</dbReference>
<dbReference type="PIRSF" id="PIRSF016938">
    <property type="entry name" value="RseA"/>
    <property type="match status" value="1"/>
</dbReference>
<dbReference type="SUPFAM" id="SSF89069">
    <property type="entry name" value="N-terminal, cytoplasmic domain of anti-sigmaE factor RseA"/>
    <property type="match status" value="1"/>
</dbReference>
<sequence length="195" mass="21733">MQKEQLSAYMDGEQVETDLIDALLRDEELQASWHSFHTVRSVMRKESAVFLGADFTAKMADLIELEDVKKVDVIAVSQPEPEDAHNSVFMQKLKAFFAPMTQVAVAAGVCLVAVLGVQSFNNKNDASNLPETPVLQTLPFNNAVQEVSYNAPSKDTLTSDQLEKKSRRIGAMLQNYELQRRMHSDALDVSSSQVR</sequence>
<evidence type="ECO:0000250" key="1"/>
<evidence type="ECO:0000255" key="2"/>
<evidence type="ECO:0000305" key="3"/>
<keyword id="KW-0997">Cell inner membrane</keyword>
<keyword id="KW-1003">Cell membrane</keyword>
<keyword id="KW-0175">Coiled coil</keyword>
<keyword id="KW-0472">Membrane</keyword>
<keyword id="KW-1185">Reference proteome</keyword>
<keyword id="KW-0735">Signal-anchor</keyword>
<keyword id="KW-0804">Transcription</keyword>
<keyword id="KW-0805">Transcription regulation</keyword>
<keyword id="KW-0812">Transmembrane</keyword>
<keyword id="KW-1133">Transmembrane helix</keyword>
<comment type="function">
    <text evidence="1">An anti-sigma factor for extracytoplasmic function (ECF) sigma factor sigma-E (RpoE). ECF sigma factors are held in an inactive form by an anti-sigma factor until released by regulated intramembrane proteolysis (RIP). RIP occurs when an extracytoplasmic signal triggers a concerted proteolytic cascade to transmit information and elicit cellular responses. The membrane-spanning regulatory substrate protein is first cut periplasmically (site-1 protease, S1P, DegS), then within the membrane itself (site-2 protease, S2P, RseP), while cytoplasmic proteases finish degrading the anti-sigma factor, liberating sigma-E (By similarity).</text>
</comment>
<comment type="subunit">
    <text evidence="1">Interacts 1:1 with ECF RNA polymerase sigma-E (RpoE); this inhibits the interaction of sigma-E with the RNA polymerase catalytic core and leads to a decreased expression of sigma-E-regulated genes. Interacts with RseB with 1:1 stoichiometry. The liberated N-terminus forms a complex with SspB and RpoE (By similarity).</text>
</comment>
<comment type="subcellular location">
    <subcellularLocation>
        <location evidence="1">Cell inner membrane</location>
        <topology evidence="1">Single-pass type II membrane protein</topology>
    </subcellularLocation>
    <text evidence="1">Following cleavage by DegS the large fragment of the protein is still in the inner membrane and retains its anti-sigma-E activity.</text>
</comment>
<comment type="domain">
    <text evidence="1">The N-terminal cytosolic domain interacts with sigma-E. After degradation by RseP binds to SspB, targeting RseA for degradation by the ClpX-ClpP protease (By similarity).</text>
</comment>
<comment type="domain">
    <text evidence="1">The C-terminal periplasmic domain interacts with RseB and is also the target for DegS.</text>
</comment>
<comment type="PTM">
    <text evidence="1">Sequentially cleaved by DegS (a site-1 protease) in its periplasmic domain between Val-147 and Ser-148, then by RseP (a site-2 protease). The N-terminal fragment is then degraded by primarily ClpX-ClpP in an ATP-dependent fashion. Sequential cleavage by DegS, RseP and ClpX-ClpP frees RpoE from RseA (By similarity).</text>
</comment>
<comment type="similarity">
    <text evidence="3">Belongs to the RseA family.</text>
</comment>
<proteinExistence type="inferred from homology"/>
<feature type="chain" id="PRO_0000097482" description="Anti-sigma-E factor RseA">
    <location>
        <begin position="1"/>
        <end position="195"/>
    </location>
</feature>
<feature type="topological domain" description="Cytoplasmic" evidence="2">
    <location>
        <begin position="1"/>
        <end position="94"/>
    </location>
</feature>
<feature type="transmembrane region" description="Helical; Signal-anchor for type II membrane protein" evidence="2">
    <location>
        <begin position="95"/>
        <end position="117"/>
    </location>
</feature>
<feature type="topological domain" description="Periplasmic" evidence="2">
    <location>
        <begin position="118"/>
        <end position="195"/>
    </location>
</feature>
<feature type="coiled-coil region" evidence="2">
    <location>
        <begin position="160"/>
        <end position="181"/>
    </location>
</feature>
<feature type="site" description="Cleavage; by DegS" evidence="1">
    <location>
        <begin position="148"/>
        <end position="149"/>
    </location>
</feature>
<organism>
    <name type="scientific">Haemophilus influenzae (strain ATCC 51907 / DSM 11121 / KW20 / Rd)</name>
    <dbReference type="NCBI Taxonomy" id="71421"/>
    <lineage>
        <taxon>Bacteria</taxon>
        <taxon>Pseudomonadati</taxon>
        <taxon>Pseudomonadota</taxon>
        <taxon>Gammaproteobacteria</taxon>
        <taxon>Pasteurellales</taxon>
        <taxon>Pasteurellaceae</taxon>
        <taxon>Haemophilus</taxon>
    </lineage>
</organism>
<reference key="1">
    <citation type="journal article" date="1995" name="Science">
        <title>Whole-genome random sequencing and assembly of Haemophilus influenzae Rd.</title>
        <authorList>
            <person name="Fleischmann R.D."/>
            <person name="Adams M.D."/>
            <person name="White O."/>
            <person name="Clayton R.A."/>
            <person name="Kirkness E.F."/>
            <person name="Kerlavage A.R."/>
            <person name="Bult C.J."/>
            <person name="Tomb J.-F."/>
            <person name="Dougherty B.A."/>
            <person name="Merrick J.M."/>
            <person name="McKenney K."/>
            <person name="Sutton G.G."/>
            <person name="FitzHugh W."/>
            <person name="Fields C.A."/>
            <person name="Gocayne J.D."/>
            <person name="Scott J.D."/>
            <person name="Shirley R."/>
            <person name="Liu L.-I."/>
            <person name="Glodek A."/>
            <person name="Kelley J.M."/>
            <person name="Weidman J.F."/>
            <person name="Phillips C.A."/>
            <person name="Spriggs T."/>
            <person name="Hedblom E."/>
            <person name="Cotton M.D."/>
            <person name="Utterback T.R."/>
            <person name="Hanna M.C."/>
            <person name="Nguyen D.T."/>
            <person name="Saudek D.M."/>
            <person name="Brandon R.C."/>
            <person name="Fine L.D."/>
            <person name="Fritchman J.L."/>
            <person name="Fuhrmann J.L."/>
            <person name="Geoghagen N.S.M."/>
            <person name="Gnehm C.L."/>
            <person name="McDonald L.A."/>
            <person name="Small K.V."/>
            <person name="Fraser C.M."/>
            <person name="Smith H.O."/>
            <person name="Venter J.C."/>
        </authorList>
    </citation>
    <scope>NUCLEOTIDE SEQUENCE [LARGE SCALE GENOMIC DNA]</scope>
    <source>
        <strain>ATCC 51907 / DSM 11121 / KW20 / Rd</strain>
    </source>
</reference>